<proteinExistence type="evidence at protein level"/>
<dbReference type="EC" id="3.1.3.16" evidence="5"/>
<dbReference type="EMBL" id="AY557186">
    <property type="protein sequence ID" value="AAT52022.1"/>
    <property type="molecule type" value="mRNA"/>
</dbReference>
<dbReference type="EMBL" id="AL035527">
    <property type="protein sequence ID" value="CAB36811.1"/>
    <property type="status" value="ALT_SEQ"/>
    <property type="molecule type" value="Genomic_DNA"/>
</dbReference>
<dbReference type="EMBL" id="AL161555">
    <property type="protein sequence ID" value="CAB81274.1"/>
    <property type="status" value="ALT_SEQ"/>
    <property type="molecule type" value="Genomic_DNA"/>
</dbReference>
<dbReference type="EMBL" id="CP002687">
    <property type="protein sequence ID" value="AEE84488.1"/>
    <property type="molecule type" value="Genomic_DNA"/>
</dbReference>
<dbReference type="EMBL" id="AK221944">
    <property type="protein sequence ID" value="BAD94401.1"/>
    <property type="molecule type" value="mRNA"/>
</dbReference>
<dbReference type="EMBL" id="AK229289">
    <property type="protein sequence ID" value="BAF01152.1"/>
    <property type="molecule type" value="mRNA"/>
</dbReference>
<dbReference type="PIR" id="T05842">
    <property type="entry name" value="T05842"/>
</dbReference>
<dbReference type="RefSeq" id="NP_193898.3">
    <property type="nucleotide sequence ID" value="NM_118287.5"/>
</dbReference>
<dbReference type="BioGRID" id="13543">
    <property type="interactions" value="13"/>
</dbReference>
<dbReference type="FunCoup" id="Q5YDB6">
    <property type="interactions" value="2006"/>
</dbReference>
<dbReference type="IntAct" id="Q5YDB6">
    <property type="interactions" value="12"/>
</dbReference>
<dbReference type="STRING" id="3702.Q5YDB6"/>
<dbReference type="iPTMnet" id="Q5YDB6"/>
<dbReference type="PaxDb" id="3702-AT4G21670.1"/>
<dbReference type="ProteomicsDB" id="224541"/>
<dbReference type="EnsemblPlants" id="AT4G21670.1">
    <property type="protein sequence ID" value="AT4G21670.1"/>
    <property type="gene ID" value="AT4G21670"/>
</dbReference>
<dbReference type="GeneID" id="828254"/>
<dbReference type="Gramene" id="AT4G21670.1">
    <property type="protein sequence ID" value="AT4G21670.1"/>
    <property type="gene ID" value="AT4G21670"/>
</dbReference>
<dbReference type="KEGG" id="ath:AT4G21670"/>
<dbReference type="Araport" id="AT4G21670"/>
<dbReference type="TAIR" id="AT4G21670">
    <property type="gene designation" value="CPL1"/>
</dbReference>
<dbReference type="eggNOG" id="KOG0323">
    <property type="taxonomic scope" value="Eukaryota"/>
</dbReference>
<dbReference type="HOGENOM" id="CLU_010333_0_0_1"/>
<dbReference type="InParanoid" id="Q5YDB6"/>
<dbReference type="OMA" id="EMEIYPP"/>
<dbReference type="PhylomeDB" id="Q5YDB6"/>
<dbReference type="PRO" id="PR:Q5YDB6"/>
<dbReference type="Proteomes" id="UP000006548">
    <property type="component" value="Chromosome 4"/>
</dbReference>
<dbReference type="ExpressionAtlas" id="Q5YDB6">
    <property type="expression patterns" value="baseline and differential"/>
</dbReference>
<dbReference type="GO" id="GO:0016607">
    <property type="term" value="C:nuclear speck"/>
    <property type="evidence" value="ECO:0007669"/>
    <property type="project" value="UniProtKB-SubCell"/>
</dbReference>
<dbReference type="GO" id="GO:0005634">
    <property type="term" value="C:nucleus"/>
    <property type="evidence" value="ECO:0000314"/>
    <property type="project" value="UniProtKB"/>
</dbReference>
<dbReference type="GO" id="GO:0046872">
    <property type="term" value="F:metal ion binding"/>
    <property type="evidence" value="ECO:0007669"/>
    <property type="project" value="UniProtKB-KW"/>
</dbReference>
<dbReference type="GO" id="GO:0016791">
    <property type="term" value="F:phosphatase activity"/>
    <property type="evidence" value="ECO:0000314"/>
    <property type="project" value="TAIR"/>
</dbReference>
<dbReference type="GO" id="GO:0004721">
    <property type="term" value="F:phosphoprotein phosphatase activity"/>
    <property type="evidence" value="ECO:0000314"/>
    <property type="project" value="TAIR"/>
</dbReference>
<dbReference type="GO" id="GO:0004722">
    <property type="term" value="F:protein serine/threonine phosphatase activity"/>
    <property type="evidence" value="ECO:0000314"/>
    <property type="project" value="GO_Central"/>
</dbReference>
<dbReference type="GO" id="GO:0003723">
    <property type="term" value="F:RNA binding"/>
    <property type="evidence" value="ECO:0007669"/>
    <property type="project" value="UniProtKB-KW"/>
</dbReference>
<dbReference type="GO" id="GO:0008420">
    <property type="term" value="F:RNA polymerase II CTD heptapeptide repeat phosphatase activity"/>
    <property type="evidence" value="ECO:0007669"/>
    <property type="project" value="InterPro"/>
</dbReference>
<dbReference type="GO" id="GO:0009738">
    <property type="term" value="P:abscisic acid-activated signaling pathway"/>
    <property type="evidence" value="ECO:0000315"/>
    <property type="project" value="TAIR"/>
</dbReference>
<dbReference type="GO" id="GO:0045892">
    <property type="term" value="P:negative regulation of DNA-templated transcription"/>
    <property type="evidence" value="ECO:0000315"/>
    <property type="project" value="TAIR"/>
</dbReference>
<dbReference type="GO" id="GO:0000184">
    <property type="term" value="P:nuclear-transcribed mRNA catabolic process, nonsense-mediated decay"/>
    <property type="evidence" value="ECO:0007669"/>
    <property type="project" value="UniProtKB-KW"/>
</dbReference>
<dbReference type="GO" id="GO:0009651">
    <property type="term" value="P:response to salt stress"/>
    <property type="evidence" value="ECO:0000315"/>
    <property type="project" value="TAIR"/>
</dbReference>
<dbReference type="GO" id="GO:0009611">
    <property type="term" value="P:response to wounding"/>
    <property type="evidence" value="ECO:0000315"/>
    <property type="project" value="UniProtKB"/>
</dbReference>
<dbReference type="CDD" id="cd07521">
    <property type="entry name" value="HAD_FCP1-like"/>
    <property type="match status" value="1"/>
</dbReference>
<dbReference type="FunFam" id="3.30.160.20:FF:000074">
    <property type="entry name" value="RNA polymerase II C-terminal domain phosphatase-like 1"/>
    <property type="match status" value="1"/>
</dbReference>
<dbReference type="FunFam" id="3.40.50.1000:FF:000035">
    <property type="entry name" value="RNA polymerase II C-terminal domain phosphatase-like 1"/>
    <property type="match status" value="1"/>
</dbReference>
<dbReference type="FunFam" id="3.30.160.20:FF:000035">
    <property type="entry name" value="RNA polymerase II C-terminal domain phosphatase-like 2"/>
    <property type="match status" value="1"/>
</dbReference>
<dbReference type="Gene3D" id="3.30.160.20">
    <property type="match status" value="2"/>
</dbReference>
<dbReference type="Gene3D" id="3.40.50.1000">
    <property type="entry name" value="HAD superfamily/HAD-like"/>
    <property type="match status" value="1"/>
</dbReference>
<dbReference type="InterPro" id="IPR014720">
    <property type="entry name" value="dsRBD_dom"/>
</dbReference>
<dbReference type="InterPro" id="IPR039189">
    <property type="entry name" value="Fcp1"/>
</dbReference>
<dbReference type="InterPro" id="IPR004274">
    <property type="entry name" value="FCP1_dom"/>
</dbReference>
<dbReference type="InterPro" id="IPR036412">
    <property type="entry name" value="HAD-like_sf"/>
</dbReference>
<dbReference type="InterPro" id="IPR023214">
    <property type="entry name" value="HAD_sf"/>
</dbReference>
<dbReference type="PANTHER" id="PTHR23081:SF0">
    <property type="entry name" value="RNA POLYMERASE II C-TERMINAL DOMAIN PHOSPHATASE-LIKE 1"/>
    <property type="match status" value="1"/>
</dbReference>
<dbReference type="PANTHER" id="PTHR23081">
    <property type="entry name" value="RNA POLYMERASE II CTD PHOSPHATASE"/>
    <property type="match status" value="1"/>
</dbReference>
<dbReference type="Pfam" id="PF00035">
    <property type="entry name" value="dsrm"/>
    <property type="match status" value="2"/>
</dbReference>
<dbReference type="Pfam" id="PF03031">
    <property type="entry name" value="NIF"/>
    <property type="match status" value="1"/>
</dbReference>
<dbReference type="SMART" id="SM00577">
    <property type="entry name" value="CPDc"/>
    <property type="match status" value="1"/>
</dbReference>
<dbReference type="SMART" id="SM00358">
    <property type="entry name" value="DSRM"/>
    <property type="match status" value="2"/>
</dbReference>
<dbReference type="SUPFAM" id="SSF54768">
    <property type="entry name" value="dsRNA-binding domain-like"/>
    <property type="match status" value="2"/>
</dbReference>
<dbReference type="SUPFAM" id="SSF56784">
    <property type="entry name" value="HAD-like"/>
    <property type="match status" value="1"/>
</dbReference>
<dbReference type="PROSITE" id="PS50137">
    <property type="entry name" value="DS_RBD"/>
    <property type="match status" value="2"/>
</dbReference>
<dbReference type="PROSITE" id="PS50969">
    <property type="entry name" value="FCP1"/>
    <property type="match status" value="1"/>
</dbReference>
<comment type="function">
    <text evidence="4 5 6 7 8 10 11 14 16">Processively dephosphorylates 'Ser-5' but not 'Ser-2' of the heptad repeats YSPTSPS in the C-terminal domain of the largest RNA polymerase II subunit (RPB1). This promotes the activity of RNA polymerase II. Together with CPL2, required for male gametes fertility. Multifunctional regulator that modulates plant growth, stress, and phytohormones responses. Negative regulator of stress gene transcription involved in abscisic acid (ABA) mediated and jasmonic acid (JA) mediated signaling pathways, NaCl, osmotic stress, wounding, and cold resistance. Negatively regulates the expression of jasmonic acid (JA) biosynthetic genes in response to wounding (PubMed:11874572, PubMed:12149434, PubMed:12149453, PubMed:15388846, PubMed:18506580, PubMed:18764923). Forms a complex with RCF3 that modulates co-transcriptional processes such as mRNA capping and polyadenylation, and functions to repress stress-inducible gene expression (PubMed:23874224). Dephosphorylates RCF3 (PubMed:26227967). Involved in the dephosphorylation of EIF4A3. This dephosphorylation retains EIF4A3 in the nucleus and limits its accumulation in the cytoplasm. Is essential for the degradation of the nonsense-mediated mRNA decay (NMD) transcripts (PubMed:26887918).</text>
</comment>
<comment type="catalytic activity">
    <reaction evidence="5">
        <text>O-phospho-L-seryl-[protein] + H2O = L-seryl-[protein] + phosphate</text>
        <dbReference type="Rhea" id="RHEA:20629"/>
        <dbReference type="Rhea" id="RHEA-COMP:9863"/>
        <dbReference type="Rhea" id="RHEA-COMP:11604"/>
        <dbReference type="ChEBI" id="CHEBI:15377"/>
        <dbReference type="ChEBI" id="CHEBI:29999"/>
        <dbReference type="ChEBI" id="CHEBI:43474"/>
        <dbReference type="ChEBI" id="CHEBI:83421"/>
        <dbReference type="EC" id="3.1.3.16"/>
    </reaction>
</comment>
<comment type="catalytic activity">
    <reaction evidence="5">
        <text>O-phospho-L-threonyl-[protein] + H2O = L-threonyl-[protein] + phosphate</text>
        <dbReference type="Rhea" id="RHEA:47004"/>
        <dbReference type="Rhea" id="RHEA-COMP:11060"/>
        <dbReference type="Rhea" id="RHEA-COMP:11605"/>
        <dbReference type="ChEBI" id="CHEBI:15377"/>
        <dbReference type="ChEBI" id="CHEBI:30013"/>
        <dbReference type="ChEBI" id="CHEBI:43474"/>
        <dbReference type="ChEBI" id="CHEBI:61977"/>
        <dbReference type="EC" id="3.1.3.16"/>
    </reaction>
</comment>
<comment type="cofactor">
    <cofactor evidence="7">
        <name>Mg(2+)</name>
        <dbReference type="ChEBI" id="CHEBI:18420"/>
    </cofactor>
    <cofactor evidence="7">
        <name>Co(2+)</name>
        <dbReference type="ChEBI" id="CHEBI:48828"/>
    </cofactor>
    <cofactor evidence="7">
        <name>Mn(2+)</name>
        <dbReference type="ChEBI" id="CHEBI:29035"/>
    </cofactor>
    <text evidence="7">Binds Mg(2+), Co(2+) or Mn(2+).</text>
</comment>
<comment type="biophysicochemical properties">
    <phDependence>
        <text evidence="7">Optimum pH is 5.5-6.0.</text>
    </phDependence>
</comment>
<comment type="subunit">
    <text evidence="9 11 12 13 15 16">Interacts with FREE1, ANAC019, MYB3, MYB4 and MYB32. Binds to DMS3 (PubMed:18541146). Interacts with RCF3 (PubMed:23874224, PubMed:24146632, PubMed:24303021, PubMed:26512101). Interacts with RS40 and RS41 (PubMed:24146632). Interacts with EIF4A3 (PubMed:26887918). Interacts with UPF3 (PubMed:26887918).</text>
</comment>
<comment type="interaction">
    <interactant intactId="EBI-1786459">
        <id>Q5YDB6</id>
    </interactant>
    <interactant intactId="EBI-6553299">
        <id>Q9ZVD0</id>
        <label>SE</label>
    </interactant>
    <organismsDiffer>false</organismsDiffer>
    <experiments>7</experiments>
</comment>
<comment type="subcellular location">
    <subcellularLocation>
        <location evidence="7 9 11 12 13 16">Nucleus</location>
    </subcellularLocation>
    <subcellularLocation>
        <location evidence="12">Nucleus speckle</location>
    </subcellularLocation>
</comment>
<comment type="tissue specificity">
    <text evidence="6">Expressed at very low levels in roots, leaves, stems, flowers and siliques.</text>
</comment>
<comment type="induction">
    <text evidence="6">Slightly repressed by ABA.</text>
</comment>
<comment type="domain">
    <text>DRBM domains are required for interactions with target transcription factors such as ANAC019 and MYB3.</text>
</comment>
<comment type="disruption phenotype">
    <text evidence="4 5 6 7 10">Grows more rapidly and flower later than wild-type plants. Increased tolerance to salt stress and to ABA during seed germination but more sensitive to freezing damage at the seedling stage, by the enhanced expression of abiotic stress-induced genes. Hypersensitivity to MeJA, accumulates high levels of anthocyanin on medium containing MeJA. Confers wound hyperresponsiveness of JA-biosynthetic genes.</text>
</comment>
<comment type="sequence caution" evidence="21">
    <conflict type="erroneous gene model prediction">
        <sequence resource="EMBL-CDS" id="CAB36811"/>
    </conflict>
</comment>
<comment type="sequence caution" evidence="21">
    <conflict type="erroneous gene model prediction">
        <sequence resource="EMBL-CDS" id="CAB81274"/>
    </conflict>
</comment>
<sequence>MYSNNRVEVFHGDGRLGELEIYPSRELNQQQDDVMKQRKKKQREVMELAKMGIRISHFSQSGERCPPLAILTTISSCGLCFKLEASPSPAQESLSLFYSSCLRDNKTAVMLLGGEELHLVAMYSENIKNDRPCFWAFSVAPGIYDSCLVMLNLRCLGIVFDLDETLVVANTMRSFEDKIDGFQRRINNEMDPQRLAVIVAEMKRYQDDKNLLKQYIESDQVVENGEVIKVQSEIVPALSDNHQPLVRPLIRLQEKNIILTRINPMIRDTSVLVRMRPSWEELRSYLTAKGRKRFEVYVCTMAERDYALEMWRLLDPEGNLINTNDLLARIVCVKSGFKKSLFNVFLDGTCHPKMALVIDDRLKVWDEKDQPRVHVVPAFAPYYSPQAEAAATPVLCVARNVACGVRGGFFRDFDDSLLPRIAEISYENDAEDIPSPPDVSHYLVSEDDTSGLNGNKDPLSFDGMADTEVERRLKEAISASSAVLPAANIDPRIAAPVQFPMASASSVSVPVPVQVVQQAIQPSAMAFPSIPFQQPQQPTSIAKHLVPSEPSLQSSPAREEGEVPESELDPDTRRRLLILQHGQDTRDPAPSEPSFPQRPPVQAPPSHVQSRNGWFPVEEEMDPAQIRRAVSKEYPLDSEMIHMEKHRPRHPSFFSKIDNSTQSDRMLHENRRPPKESLRRDEQLRSNNNLPDSHPFYGEDASWNQSSSRNSDLDFLPERSVSATETSADVLHGIAIKCGAKVEYKPSLVSSTDLRFSVEAWLSNQKIGEGIGKSRREALHKAAEASIQNLADGYMRANGDPGPSHRDATPFTNENISMGNANALNNQPFARDETALPVSSRPTDPRLEGSMRHTGSITALRELCASEGLEMAFQSQRQLPSDMVHRDELHAQVEIDGRVVGEGVGSTWDEARMQAAERALSSVRSMLGQPLHKRQGSPRSFGGMSNKRLKPDFQRSLQRMPSSGRYS</sequence>
<protein>
    <recommendedName>
        <fullName evidence="21">RNA polymerase II C-terminal domain phosphatase-like 1</fullName>
        <shortName evidence="21">FCP-like 1</shortName>
        <ecNumber evidence="5">3.1.3.16</ecNumber>
    </recommendedName>
    <alternativeName>
        <fullName>Carboxyl-terminal phosphatase-like 1</fullName>
        <shortName evidence="19">AtCPL1</shortName>
        <shortName>CTD phosphatase-like 1</shortName>
    </alternativeName>
    <alternativeName>
        <fullName evidence="18">Protein FIERY 2</fullName>
    </alternativeName>
    <alternativeName>
        <fullName evidence="17">Protein JASMONATE OVEREXPRESSING 1</fullName>
    </alternativeName>
    <alternativeName>
        <fullName evidence="20">Protein SHINY 4</fullName>
    </alternativeName>
</protein>
<feature type="chain" id="PRO_0000376083" description="RNA polymerase II C-terminal domain phosphatase-like 1">
    <location>
        <begin position="1"/>
        <end position="967"/>
    </location>
</feature>
<feature type="domain" description="FCP1 homology" evidence="2">
    <location>
        <begin position="151"/>
        <end position="401"/>
    </location>
</feature>
<feature type="domain" description="DRBM 1" evidence="1">
    <location>
        <begin position="724"/>
        <end position="792"/>
    </location>
</feature>
<feature type="domain" description="DRBM 2" evidence="1">
    <location>
        <begin position="855"/>
        <end position="925"/>
    </location>
</feature>
<feature type="region of interest" description="Disordered" evidence="3">
    <location>
        <begin position="548"/>
        <end position="611"/>
    </location>
</feature>
<feature type="region of interest" description="Disordered" evidence="3">
    <location>
        <begin position="643"/>
        <end position="712"/>
    </location>
</feature>
<feature type="region of interest" description="Disordered" evidence="3">
    <location>
        <begin position="928"/>
        <end position="967"/>
    </location>
</feature>
<feature type="region of interest" description="Required for nuclear localization (NLS)" evidence="7">
    <location>
        <begin position="945"/>
        <end position="967"/>
    </location>
</feature>
<feature type="short sequence motif" description="Nuclear localization signal (NLS)" evidence="13">
    <location>
        <begin position="38"/>
        <end position="41"/>
    </location>
</feature>
<feature type="short sequence motif" description="Nuclear localization signal (NLS)" evidence="13">
    <location>
        <begin position="947"/>
        <end position="951"/>
    </location>
</feature>
<feature type="compositionally biased region" description="Pro residues" evidence="3">
    <location>
        <begin position="590"/>
        <end position="603"/>
    </location>
</feature>
<feature type="compositionally biased region" description="Basic and acidic residues" evidence="3">
    <location>
        <begin position="665"/>
        <end position="684"/>
    </location>
</feature>
<feature type="compositionally biased region" description="Polar residues" evidence="3">
    <location>
        <begin position="955"/>
        <end position="967"/>
    </location>
</feature>
<feature type="mutagenesis site" description="In cpl1-3 and shi4; enhanced expression of abiotic stress-induced genes, and cold-sensitive phenotype." evidence="10 11">
    <original>E</original>
    <variation>K</variation>
    <location>
        <position position="116"/>
    </location>
</feature>
<feature type="mutagenesis site" description="Loss of catalytic activity." evidence="13">
    <original>D</original>
    <variation>A</variation>
    <location>
        <position position="161"/>
    </location>
</feature>
<feature type="sequence conflict" description="In Ref. 4; BAF01152." evidence="21" ref="4">
    <original>E</original>
    <variation>V</variation>
    <location>
        <position position="446"/>
    </location>
</feature>
<feature type="sequence conflict" description="In Ref. 4; BAD94401." evidence="21" ref="4">
    <original>E</original>
    <variation>V</variation>
    <location>
        <position position="669"/>
    </location>
</feature>
<feature type="sequence conflict" description="In Ref. 4; BAD94401." evidence="21" ref="4">
    <original>A</original>
    <variation>T</variation>
    <location>
        <position position="797"/>
    </location>
</feature>
<accession>Q5YDB6</accession>
<accession>Q0WNZ7</accession>
<accession>Q56WT8</accession>
<accession>Q9SVT0</accession>
<reference key="1">
    <citation type="journal article" date="2004" name="Proc. Natl. Acad. Sci. U.S.A.">
        <title>Arabidopsis C-terminal domain phosphatase-like 1 and 2 are essential Ser-5-specific C-terminal domain phosphatases.</title>
        <authorList>
            <person name="Koiwa H."/>
            <person name="Hausmann S."/>
            <person name="Bang W.Y."/>
            <person name="Ueda A."/>
            <person name="Kondo N."/>
            <person name="Hiraguri A."/>
            <person name="Fukuhara T."/>
            <person name="Bahk J.D."/>
            <person name="Yun D.-J."/>
            <person name="Bressan R.A."/>
            <person name="Hasegawa P.M."/>
            <person name="Shuman S."/>
        </authorList>
    </citation>
    <scope>NUCLEOTIDE SEQUENCE [MRNA]</scope>
    <scope>FUNCTION</scope>
    <scope>DISRUPTION PHENOTYPE</scope>
    <scope>BIOPHYSICOCHEMICAL PROPERTIES</scope>
    <scope>SUBCELLULAR LOCATION</scope>
    <scope>COFACTOR</scope>
</reference>
<reference key="2">
    <citation type="journal article" date="1999" name="Nature">
        <title>Sequence and analysis of chromosome 4 of the plant Arabidopsis thaliana.</title>
        <authorList>
            <person name="Mayer K.F.X."/>
            <person name="Schueller C."/>
            <person name="Wambutt R."/>
            <person name="Murphy G."/>
            <person name="Volckaert G."/>
            <person name="Pohl T."/>
            <person name="Duesterhoeft A."/>
            <person name="Stiekema W."/>
            <person name="Entian K.-D."/>
            <person name="Terryn N."/>
            <person name="Harris B."/>
            <person name="Ansorge W."/>
            <person name="Brandt P."/>
            <person name="Grivell L.A."/>
            <person name="Rieger M."/>
            <person name="Weichselgartner M."/>
            <person name="de Simone V."/>
            <person name="Obermaier B."/>
            <person name="Mache R."/>
            <person name="Mueller M."/>
            <person name="Kreis M."/>
            <person name="Delseny M."/>
            <person name="Puigdomenech P."/>
            <person name="Watson M."/>
            <person name="Schmidtheini T."/>
            <person name="Reichert B."/>
            <person name="Portetelle D."/>
            <person name="Perez-Alonso M."/>
            <person name="Boutry M."/>
            <person name="Bancroft I."/>
            <person name="Vos P."/>
            <person name="Hoheisel J."/>
            <person name="Zimmermann W."/>
            <person name="Wedler H."/>
            <person name="Ridley P."/>
            <person name="Langham S.-A."/>
            <person name="McCullagh B."/>
            <person name="Bilham L."/>
            <person name="Robben J."/>
            <person name="van der Schueren J."/>
            <person name="Grymonprez B."/>
            <person name="Chuang Y.-J."/>
            <person name="Vandenbussche F."/>
            <person name="Braeken M."/>
            <person name="Weltjens I."/>
            <person name="Voet M."/>
            <person name="Bastiaens I."/>
            <person name="Aert R."/>
            <person name="Defoor E."/>
            <person name="Weitzenegger T."/>
            <person name="Bothe G."/>
            <person name="Ramsperger U."/>
            <person name="Hilbert H."/>
            <person name="Braun M."/>
            <person name="Holzer E."/>
            <person name="Brandt A."/>
            <person name="Peters S."/>
            <person name="van Staveren M."/>
            <person name="Dirkse W."/>
            <person name="Mooijman P."/>
            <person name="Klein Lankhorst R."/>
            <person name="Rose M."/>
            <person name="Hauf J."/>
            <person name="Koetter P."/>
            <person name="Berneiser S."/>
            <person name="Hempel S."/>
            <person name="Feldpausch M."/>
            <person name="Lamberth S."/>
            <person name="Van den Daele H."/>
            <person name="De Keyser A."/>
            <person name="Buysshaert C."/>
            <person name="Gielen J."/>
            <person name="Villarroel R."/>
            <person name="De Clercq R."/>
            <person name="van Montagu M."/>
            <person name="Rogers J."/>
            <person name="Cronin A."/>
            <person name="Quail M.A."/>
            <person name="Bray-Allen S."/>
            <person name="Clark L."/>
            <person name="Doggett J."/>
            <person name="Hall S."/>
            <person name="Kay M."/>
            <person name="Lennard N."/>
            <person name="McLay K."/>
            <person name="Mayes R."/>
            <person name="Pettett A."/>
            <person name="Rajandream M.A."/>
            <person name="Lyne M."/>
            <person name="Benes V."/>
            <person name="Rechmann S."/>
            <person name="Borkova D."/>
            <person name="Bloecker H."/>
            <person name="Scharfe M."/>
            <person name="Grimm M."/>
            <person name="Loehnert T.-H."/>
            <person name="Dose S."/>
            <person name="de Haan M."/>
            <person name="Maarse A.C."/>
            <person name="Schaefer M."/>
            <person name="Mueller-Auer S."/>
            <person name="Gabel C."/>
            <person name="Fuchs M."/>
            <person name="Fartmann B."/>
            <person name="Granderath K."/>
            <person name="Dauner D."/>
            <person name="Herzl A."/>
            <person name="Neumann S."/>
            <person name="Argiriou A."/>
            <person name="Vitale D."/>
            <person name="Liguori R."/>
            <person name="Piravandi E."/>
            <person name="Massenet O."/>
            <person name="Quigley F."/>
            <person name="Clabauld G."/>
            <person name="Muendlein A."/>
            <person name="Felber R."/>
            <person name="Schnabl S."/>
            <person name="Hiller R."/>
            <person name="Schmidt W."/>
            <person name="Lecharny A."/>
            <person name="Aubourg S."/>
            <person name="Chefdor F."/>
            <person name="Cooke R."/>
            <person name="Berger C."/>
            <person name="Monfort A."/>
            <person name="Casacuberta E."/>
            <person name="Gibbons T."/>
            <person name="Weber N."/>
            <person name="Vandenbol M."/>
            <person name="Bargues M."/>
            <person name="Terol J."/>
            <person name="Torres A."/>
            <person name="Perez-Perez A."/>
            <person name="Purnelle B."/>
            <person name="Bent E."/>
            <person name="Johnson S."/>
            <person name="Tacon D."/>
            <person name="Jesse T."/>
            <person name="Heijnen L."/>
            <person name="Schwarz S."/>
            <person name="Scholler P."/>
            <person name="Heber S."/>
            <person name="Francs P."/>
            <person name="Bielke C."/>
            <person name="Frishman D."/>
            <person name="Haase D."/>
            <person name="Lemcke K."/>
            <person name="Mewes H.-W."/>
            <person name="Stocker S."/>
            <person name="Zaccaria P."/>
            <person name="Bevan M."/>
            <person name="Wilson R.K."/>
            <person name="de la Bastide M."/>
            <person name="Habermann K."/>
            <person name="Parnell L."/>
            <person name="Dedhia N."/>
            <person name="Gnoj L."/>
            <person name="Schutz K."/>
            <person name="Huang E."/>
            <person name="Spiegel L."/>
            <person name="Sekhon M."/>
            <person name="Murray J."/>
            <person name="Sheet P."/>
            <person name="Cordes M."/>
            <person name="Abu-Threideh J."/>
            <person name="Stoneking T."/>
            <person name="Kalicki J."/>
            <person name="Graves T."/>
            <person name="Harmon G."/>
            <person name="Edwards J."/>
            <person name="Latreille P."/>
            <person name="Courtney L."/>
            <person name="Cloud J."/>
            <person name="Abbott A."/>
            <person name="Scott K."/>
            <person name="Johnson D."/>
            <person name="Minx P."/>
            <person name="Bentley D."/>
            <person name="Fulton B."/>
            <person name="Miller N."/>
            <person name="Greco T."/>
            <person name="Kemp K."/>
            <person name="Kramer J."/>
            <person name="Fulton L."/>
            <person name="Mardis E."/>
            <person name="Dante M."/>
            <person name="Pepin K."/>
            <person name="Hillier L.W."/>
            <person name="Nelson J."/>
            <person name="Spieth J."/>
            <person name="Ryan E."/>
            <person name="Andrews S."/>
            <person name="Geisel C."/>
            <person name="Layman D."/>
            <person name="Du H."/>
            <person name="Ali J."/>
            <person name="Berghoff A."/>
            <person name="Jones K."/>
            <person name="Drone K."/>
            <person name="Cotton M."/>
            <person name="Joshu C."/>
            <person name="Antonoiu B."/>
            <person name="Zidanic M."/>
            <person name="Strong C."/>
            <person name="Sun H."/>
            <person name="Lamar B."/>
            <person name="Yordan C."/>
            <person name="Ma P."/>
            <person name="Zhong J."/>
            <person name="Preston R."/>
            <person name="Vil D."/>
            <person name="Shekher M."/>
            <person name="Matero A."/>
            <person name="Shah R."/>
            <person name="Swaby I.K."/>
            <person name="O'Shaughnessy A."/>
            <person name="Rodriguez M."/>
            <person name="Hoffman J."/>
            <person name="Till S."/>
            <person name="Granat S."/>
            <person name="Shohdy N."/>
            <person name="Hasegawa A."/>
            <person name="Hameed A."/>
            <person name="Lodhi M."/>
            <person name="Johnson A."/>
            <person name="Chen E."/>
            <person name="Marra M.A."/>
            <person name="Martienssen R."/>
            <person name="McCombie W.R."/>
        </authorList>
    </citation>
    <scope>NUCLEOTIDE SEQUENCE [LARGE SCALE GENOMIC DNA]</scope>
    <source>
        <strain>cv. Columbia</strain>
    </source>
</reference>
<reference key="3">
    <citation type="journal article" date="2017" name="Plant J.">
        <title>Araport11: a complete reannotation of the Arabidopsis thaliana reference genome.</title>
        <authorList>
            <person name="Cheng C.Y."/>
            <person name="Krishnakumar V."/>
            <person name="Chan A.P."/>
            <person name="Thibaud-Nissen F."/>
            <person name="Schobel S."/>
            <person name="Town C.D."/>
        </authorList>
    </citation>
    <scope>GENOME REANNOTATION</scope>
    <source>
        <strain>cv. Columbia</strain>
    </source>
</reference>
<reference key="4">
    <citation type="submission" date="2006-07" db="EMBL/GenBank/DDBJ databases">
        <title>Large-scale analysis of RIKEN Arabidopsis full-length (RAFL) cDNAs.</title>
        <authorList>
            <person name="Totoki Y."/>
            <person name="Seki M."/>
            <person name="Ishida J."/>
            <person name="Nakajima M."/>
            <person name="Enju A."/>
            <person name="Kamiya A."/>
            <person name="Narusaka M."/>
            <person name="Shin-i T."/>
            <person name="Nakagawa M."/>
            <person name="Sakamoto N."/>
            <person name="Oishi K."/>
            <person name="Kohara Y."/>
            <person name="Kobayashi M."/>
            <person name="Toyoda A."/>
            <person name="Sakaki Y."/>
            <person name="Sakurai T."/>
            <person name="Iida K."/>
            <person name="Akiyama K."/>
            <person name="Satou M."/>
            <person name="Toyoda T."/>
            <person name="Konagaya A."/>
            <person name="Carninci P."/>
            <person name="Kawai J."/>
            <person name="Hayashizaki Y."/>
            <person name="Shinozaki K."/>
        </authorList>
    </citation>
    <scope>NUCLEOTIDE SEQUENCE [LARGE SCALE MRNA]</scope>
    <source>
        <strain>cv. Columbia</strain>
    </source>
</reference>
<reference key="5">
    <citation type="journal article" date="2002" name="Plant J.">
        <title>Fusion genetic analysis of jasmonate-signalling mutants in Arabidopsis.</title>
        <authorList>
            <person name="Jensen A.B."/>
            <person name="Raventos D."/>
            <person name="Mundy J."/>
        </authorList>
    </citation>
    <scope>FUNCTION</scope>
    <scope>DISRUPTION PHENOTYPE</scope>
</reference>
<reference key="6">
    <citation type="journal article" date="2002" name="Proc. Natl. Acad. Sci. U.S.A.">
        <title>C-terminal domain phosphatase-like family members (AtCPLs) differentially regulate Arabidopsis thaliana abiotic stress signaling, growth, and development.</title>
        <authorList>
            <person name="Koiwa H."/>
            <person name="Barb A.W."/>
            <person name="Xiong L."/>
            <person name="Li F."/>
            <person name="McCully M.G."/>
            <person name="Lee B.-H."/>
            <person name="Sokolchik I."/>
            <person name="Zhu J."/>
            <person name="Gong Z."/>
            <person name="Reddy M."/>
            <person name="Sharkhuu A."/>
            <person name="Manabe Y."/>
            <person name="Yokoi S."/>
            <person name="Zhu J.-K."/>
            <person name="Bressan R.A."/>
            <person name="Hasegawa P.M."/>
        </authorList>
    </citation>
    <scope>FUNCTION</scope>
    <scope>CATALYTIC ACTIVITY</scope>
    <scope>DISRUPTION PHENOTYPE</scope>
</reference>
<reference key="7">
    <citation type="journal article" date="2002" name="Proc. Natl. Acad. Sci. U.S.A.">
        <title>Repression of stress-responsive genes by FIERY2, a novel transcriptional regulator in Arabidopsis.</title>
        <authorList>
            <person name="Xiong L."/>
            <person name="Lee H."/>
            <person name="Ishitani M."/>
            <person name="Tanaka Y."/>
            <person name="Stevenson B."/>
            <person name="Koiwa H."/>
            <person name="Bressan R.A."/>
            <person name="Hasegawa P.M."/>
            <person name="Zhu J.-K."/>
        </authorList>
    </citation>
    <scope>FUNCTION</scope>
    <scope>TISSUE SPECIFICITY</scope>
    <scope>INDUCTION</scope>
    <scope>DISRUPTION PHENOTYPE</scope>
</reference>
<reference key="8">
    <citation type="journal article" date="2008" name="Biochem. Biophys. Res. Commun.">
        <title>The C-terminal region (640-967) of Arabidopsis CPL1 interacts with the abiotic stress- and ABA-responsive transcription factors.</title>
        <authorList>
            <person name="Bang W.Y."/>
            <person name="Kim S.W."/>
            <person name="Jeong I.S."/>
            <person name="Koiwa H."/>
            <person name="Bahk J.D."/>
        </authorList>
    </citation>
    <scope>INTERACTION WITH FREE1; ANAC019; DMS3; MYB3; MYB4 AND MYB32</scope>
    <scope>SUBCELLULAR LOCATION</scope>
    <scope>DRBM DOMAINS</scope>
</reference>
<reference key="9">
    <citation type="journal article" date="2008" name="Plant Mol. Biol.">
        <title>The Arabidopsis thaliana carboxyl-terminal domain phosphatase-like 2 regulates plant growth, stress and auxin responses.</title>
        <authorList>
            <person name="Ueda A."/>
            <person name="Li P."/>
            <person name="Feng Y."/>
            <person name="Vikram M."/>
            <person name="Kim S."/>
            <person name="Kang C.H."/>
            <person name="Kang J.S."/>
            <person name="Bahk J.D."/>
            <person name="Lee S.Y."/>
            <person name="Fukuhara T."/>
            <person name="Staswick P.E."/>
            <person name="Pepper A.E."/>
            <person name="Koiwa H."/>
        </authorList>
    </citation>
    <scope>FUNCTION</scope>
</reference>
<reference key="10">
    <citation type="journal article" date="2008" name="Plant Physiol.">
        <title>Evolutionary radiation pattern of novel protein phosphatases revealed by analysis of protein data from the completely sequenced genomes of humans, green algae, and higher plants.</title>
        <authorList>
            <person name="Kerk D."/>
            <person name="Templeton G."/>
            <person name="Moorhead G.B.G."/>
        </authorList>
    </citation>
    <scope>GENE FAMILY</scope>
</reference>
<reference key="11">
    <citation type="journal article" date="2009" name="Plant J.">
        <title>CTD phosphatases in the attenuation of wound-induced transcription of jasmonic acid biosynthetic genes in Arabidopsis.</title>
        <authorList>
            <person name="Matsuda O."/>
            <person name="Sakamoto H."/>
            <person name="Nakao Y."/>
            <person name="Oda K."/>
            <person name="Iba K."/>
        </authorList>
    </citation>
    <scope>FUNCTION</scope>
    <scope>DISRUPTION PHENOTYPE</scope>
    <scope>MUTAGENESIS OF GLU-116</scope>
</reference>
<reference key="12">
    <citation type="journal article" date="2013" name="PLoS Genet.">
        <title>The arabidopsis RNA binding protein with K homology motifs, SHINY1, interacts with the C-terminal domain phosphatase-like 1 (CPL1) to repress stress-inducible gene expression.</title>
        <authorList>
            <person name="Jiang J."/>
            <person name="Wang B."/>
            <person name="Shen Y."/>
            <person name="Wang H."/>
            <person name="Feng Q."/>
            <person name="Shi H."/>
        </authorList>
    </citation>
    <scope>FUNCTION</scope>
    <scope>INTERACTION WITH RCF3</scope>
    <scope>SUBCELLULAR LOCATION</scope>
    <scope>MUTAGENESIS OF GLU-116</scope>
</reference>
<reference key="13">
    <citation type="journal article" date="2013" name="PLoS Genet.">
        <title>A KH-domain RNA-binding protein interacts with FIERY2/CTD phosphatase-like 1 and splicing factors and is important for pre-mRNA splicing in Arabidopsis.</title>
        <authorList>
            <person name="Chen T."/>
            <person name="Cui P."/>
            <person name="Chen H."/>
            <person name="Ali S."/>
            <person name="Zhang S."/>
            <person name="Xiong L."/>
        </authorList>
    </citation>
    <scope>IDENTIFICATION BY MASS SPECTROMETRY</scope>
    <scope>INTERACTION WITH RCF3; RS40 AND RS41</scope>
    <scope>SUBCELLULAR LOCATION</scope>
</reference>
<reference key="14">
    <citation type="journal article" date="2013" name="PLoS ONE">
        <title>Regulation of abiotic stress signalling by Arabidopsis C-terminal domain phosphatase-like 1 requires interaction with a k-homology domain-containing protein.</title>
        <authorList>
            <person name="Jeong I.S."/>
            <person name="Fukudome A."/>
            <person name="Aksoy E."/>
            <person name="Bang W.Y."/>
            <person name="Kim S."/>
            <person name="Guan Q."/>
            <person name="Bahk J.D."/>
            <person name="May K.A."/>
            <person name="Russell W.K."/>
            <person name="Zhu J."/>
            <person name="Koiwa H."/>
        </authorList>
    </citation>
    <scope>IDENTIFICATION BY MASS SPECTROMETRY</scope>
    <scope>INTERACTION WITH RCF3</scope>
    <scope>SUBCELLULAR LOCATION</scope>
    <scope>NUCLEAR LOCALIZATION SIGNAL</scope>
    <scope>MUTAGENESIS OF ASP-161</scope>
</reference>
<reference key="15">
    <citation type="journal article" date="2015" name="Nucleic Acids Res.">
        <title>The RNA-binding protein HOS5 and serine/arginine-rich proteins RS40 and RS41 participate in miRNA biogenesis in Arabidopsis.</title>
        <authorList>
            <person name="Chen T."/>
            <person name="Cui P."/>
            <person name="Xiong L."/>
        </authorList>
    </citation>
    <scope>FUNCTION</scope>
</reference>
<reference key="16">
    <citation type="journal article" date="2015" name="Proc. Natl. Acad. Sci. U.S.A.">
        <title>KH domain protein RCF3 is a tissue-biased regulator of the plant miRNA biogenesis cofactor HYL1.</title>
        <authorList>
            <person name="Karlsson P."/>
            <person name="Christie M.D."/>
            <person name="Seymour D.K."/>
            <person name="Wang H."/>
            <person name="Wang X."/>
            <person name="Hagmann J."/>
            <person name="Kulcheski F."/>
            <person name="Manavella P.A."/>
        </authorList>
    </citation>
    <scope>INTERACTION WITH RCF3</scope>
</reference>
<reference key="17">
    <citation type="journal article" date="2016" name="Plant Cell">
        <title>The RNA polymerase II C-terminal domain phosphatase-like protein FIERY2/CPL1 interacts with eIF4AIII and is essential for nonsense-mediated mrna decay in Arabidopsis.</title>
        <authorList>
            <person name="Cui P."/>
            <person name="Chen T."/>
            <person name="Qin T."/>
            <person name="Ding F."/>
            <person name="Wang Z."/>
            <person name="Chen H."/>
            <person name="Xiong L."/>
        </authorList>
    </citation>
    <scope>FUNCTION</scope>
    <scope>INTERACTION WITH EIF4A3 AND UPF3</scope>
    <scope>SUBCELLULAR LOCATION</scope>
</reference>
<gene>
    <name evidence="19" type="primary">CPL1</name>
    <name evidence="18" type="synonym">FRY2</name>
    <name evidence="21" type="synonym">JOE1</name>
    <name evidence="20" type="synonym">SHI4</name>
    <name evidence="22" type="ordered locus">At4g21670</name>
    <name evidence="23" type="ORF">F17L22.130</name>
</gene>
<keyword id="KW-0938">Abscisic acid signaling pathway</keyword>
<keyword id="KW-0217">Developmental protein</keyword>
<keyword id="KW-0378">Hydrolase</keyword>
<keyword id="KW-1184">Jasmonic acid signaling pathway</keyword>
<keyword id="KW-0479">Metal-binding</keyword>
<keyword id="KW-0866">Nonsense-mediated mRNA decay</keyword>
<keyword id="KW-0539">Nucleus</keyword>
<keyword id="KW-1185">Reference proteome</keyword>
<keyword id="KW-0677">Repeat</keyword>
<keyword id="KW-0678">Repressor</keyword>
<keyword id="KW-0694">RNA-binding</keyword>
<keyword id="KW-0804">Transcription</keyword>
<keyword id="KW-0805">Transcription regulation</keyword>
<name>CPL1_ARATH</name>
<organism>
    <name type="scientific">Arabidopsis thaliana</name>
    <name type="common">Mouse-ear cress</name>
    <dbReference type="NCBI Taxonomy" id="3702"/>
    <lineage>
        <taxon>Eukaryota</taxon>
        <taxon>Viridiplantae</taxon>
        <taxon>Streptophyta</taxon>
        <taxon>Embryophyta</taxon>
        <taxon>Tracheophyta</taxon>
        <taxon>Spermatophyta</taxon>
        <taxon>Magnoliopsida</taxon>
        <taxon>eudicotyledons</taxon>
        <taxon>Gunneridae</taxon>
        <taxon>Pentapetalae</taxon>
        <taxon>rosids</taxon>
        <taxon>malvids</taxon>
        <taxon>Brassicales</taxon>
        <taxon>Brassicaceae</taxon>
        <taxon>Camelineae</taxon>
        <taxon>Arabidopsis</taxon>
    </lineage>
</organism>
<evidence type="ECO:0000255" key="1">
    <source>
        <dbReference type="PROSITE-ProRule" id="PRU00266"/>
    </source>
</evidence>
<evidence type="ECO:0000255" key="2">
    <source>
        <dbReference type="PROSITE-ProRule" id="PRU00336"/>
    </source>
</evidence>
<evidence type="ECO:0000256" key="3">
    <source>
        <dbReference type="SAM" id="MobiDB-lite"/>
    </source>
</evidence>
<evidence type="ECO:0000269" key="4">
    <source>
    </source>
</evidence>
<evidence type="ECO:0000269" key="5">
    <source>
    </source>
</evidence>
<evidence type="ECO:0000269" key="6">
    <source>
    </source>
</evidence>
<evidence type="ECO:0000269" key="7">
    <source>
    </source>
</evidence>
<evidence type="ECO:0000269" key="8">
    <source>
    </source>
</evidence>
<evidence type="ECO:0000269" key="9">
    <source>
    </source>
</evidence>
<evidence type="ECO:0000269" key="10">
    <source>
    </source>
</evidence>
<evidence type="ECO:0000269" key="11">
    <source>
    </source>
</evidence>
<evidence type="ECO:0000269" key="12">
    <source>
    </source>
</evidence>
<evidence type="ECO:0000269" key="13">
    <source>
    </source>
</evidence>
<evidence type="ECO:0000269" key="14">
    <source>
    </source>
</evidence>
<evidence type="ECO:0000269" key="15">
    <source>
    </source>
</evidence>
<evidence type="ECO:0000269" key="16">
    <source>
    </source>
</evidence>
<evidence type="ECO:0000303" key="17">
    <source>
    </source>
</evidence>
<evidence type="ECO:0000303" key="18">
    <source>
    </source>
</evidence>
<evidence type="ECO:0000303" key="19">
    <source>
    </source>
</evidence>
<evidence type="ECO:0000303" key="20">
    <source>
    </source>
</evidence>
<evidence type="ECO:0000305" key="21"/>
<evidence type="ECO:0000312" key="22">
    <source>
        <dbReference type="Araport" id="AT4G21670"/>
    </source>
</evidence>
<evidence type="ECO:0000312" key="23">
    <source>
        <dbReference type="EMBL" id="CAB36811.1"/>
    </source>
</evidence>